<dbReference type="EMBL" id="CP001110">
    <property type="protein sequence ID" value="ACF42434.1"/>
    <property type="molecule type" value="Genomic_DNA"/>
</dbReference>
<dbReference type="RefSeq" id="WP_012506932.1">
    <property type="nucleotide sequence ID" value="NC_011060.1"/>
</dbReference>
<dbReference type="SMR" id="B4SAR5"/>
<dbReference type="STRING" id="324925.Ppha_0078"/>
<dbReference type="KEGG" id="pph:Ppha_0078"/>
<dbReference type="eggNOG" id="COG0216">
    <property type="taxonomic scope" value="Bacteria"/>
</dbReference>
<dbReference type="HOGENOM" id="CLU_036856_0_1_10"/>
<dbReference type="OrthoDB" id="9806673at2"/>
<dbReference type="Proteomes" id="UP000002724">
    <property type="component" value="Chromosome"/>
</dbReference>
<dbReference type="GO" id="GO:0005737">
    <property type="term" value="C:cytoplasm"/>
    <property type="evidence" value="ECO:0007669"/>
    <property type="project" value="UniProtKB-SubCell"/>
</dbReference>
<dbReference type="GO" id="GO:0016149">
    <property type="term" value="F:translation release factor activity, codon specific"/>
    <property type="evidence" value="ECO:0007669"/>
    <property type="project" value="UniProtKB-UniRule"/>
</dbReference>
<dbReference type="FunFam" id="3.30.160.20:FF:000004">
    <property type="entry name" value="Peptide chain release factor 1"/>
    <property type="match status" value="1"/>
</dbReference>
<dbReference type="FunFam" id="3.30.70.1660:FF:000002">
    <property type="entry name" value="Peptide chain release factor 1"/>
    <property type="match status" value="1"/>
</dbReference>
<dbReference type="Gene3D" id="3.30.160.20">
    <property type="match status" value="1"/>
</dbReference>
<dbReference type="Gene3D" id="3.30.70.1660">
    <property type="match status" value="2"/>
</dbReference>
<dbReference type="Gene3D" id="6.10.140.1950">
    <property type="match status" value="1"/>
</dbReference>
<dbReference type="HAMAP" id="MF_00093">
    <property type="entry name" value="Rel_fac_1"/>
    <property type="match status" value="1"/>
</dbReference>
<dbReference type="InterPro" id="IPR005139">
    <property type="entry name" value="PCRF"/>
</dbReference>
<dbReference type="InterPro" id="IPR000352">
    <property type="entry name" value="Pep_chain_release_fac_I"/>
</dbReference>
<dbReference type="InterPro" id="IPR045853">
    <property type="entry name" value="Pep_chain_release_fac_I_sf"/>
</dbReference>
<dbReference type="InterPro" id="IPR050057">
    <property type="entry name" value="Prokaryotic/Mito_RF"/>
</dbReference>
<dbReference type="InterPro" id="IPR004373">
    <property type="entry name" value="RF-1"/>
</dbReference>
<dbReference type="NCBIfam" id="TIGR00019">
    <property type="entry name" value="prfA"/>
    <property type="match status" value="1"/>
</dbReference>
<dbReference type="NCBIfam" id="NF001859">
    <property type="entry name" value="PRK00591.1"/>
    <property type="match status" value="1"/>
</dbReference>
<dbReference type="PANTHER" id="PTHR43804">
    <property type="entry name" value="LD18447P"/>
    <property type="match status" value="1"/>
</dbReference>
<dbReference type="PANTHER" id="PTHR43804:SF7">
    <property type="entry name" value="LD18447P"/>
    <property type="match status" value="1"/>
</dbReference>
<dbReference type="Pfam" id="PF03462">
    <property type="entry name" value="PCRF"/>
    <property type="match status" value="1"/>
</dbReference>
<dbReference type="Pfam" id="PF00472">
    <property type="entry name" value="RF-1"/>
    <property type="match status" value="1"/>
</dbReference>
<dbReference type="SMART" id="SM00937">
    <property type="entry name" value="PCRF"/>
    <property type="match status" value="1"/>
</dbReference>
<dbReference type="SUPFAM" id="SSF75620">
    <property type="entry name" value="Release factor"/>
    <property type="match status" value="1"/>
</dbReference>
<dbReference type="PROSITE" id="PS00745">
    <property type="entry name" value="RF_PROK_I"/>
    <property type="match status" value="1"/>
</dbReference>
<organism>
    <name type="scientific">Pelodictyon phaeoclathratiforme (strain DSM 5477 / BU-1)</name>
    <dbReference type="NCBI Taxonomy" id="324925"/>
    <lineage>
        <taxon>Bacteria</taxon>
        <taxon>Pseudomonadati</taxon>
        <taxon>Chlorobiota</taxon>
        <taxon>Chlorobiia</taxon>
        <taxon>Chlorobiales</taxon>
        <taxon>Chlorobiaceae</taxon>
        <taxon>Chlorobium/Pelodictyon group</taxon>
        <taxon>Pelodictyon</taxon>
    </lineage>
</organism>
<gene>
    <name evidence="1" type="primary">prfA</name>
    <name type="ordered locus">Ppha_0078</name>
</gene>
<sequence>MLDKLQSIKEKHLDLEQLLSDPNAAADQVRFRKLNKEYSDLREIVQAYDLYAATKTELDESRQLLKSESDAEMKELVQAEISELQKKLPELEQQLKILLLPKEEADSRNVIIEIRAGTGGEEAALFAADLTRMYQRYAEHQGWQCETLHFNESSVPGGFREITLSVNGHDVYGTMKYESGVHRVQRVPDTETQGRIHTSAVSVAVLPEAEEVDVEIRREDLRFDTYRSGGKGGQNVNKVETAVRITHMPTGIVSACQEQRSQLQNKERAMQMLRTKLYDIQLAEQQQQRADLRRSMVTTGDRSAKIRTYNYPQSRVTDHRIAFTSHALPQILQGDLQDIINALKMHDQAARLQAELV</sequence>
<comment type="function">
    <text evidence="1">Peptide chain release factor 1 directs the termination of translation in response to the peptide chain termination codons UAG and UAA.</text>
</comment>
<comment type="subcellular location">
    <subcellularLocation>
        <location evidence="1">Cytoplasm</location>
    </subcellularLocation>
</comment>
<comment type="PTM">
    <text evidence="1">Methylated by PrmC. Methylation increases the termination efficiency of RF1.</text>
</comment>
<comment type="similarity">
    <text evidence="1">Belongs to the prokaryotic/mitochondrial release factor family.</text>
</comment>
<keyword id="KW-0963">Cytoplasm</keyword>
<keyword id="KW-0488">Methylation</keyword>
<keyword id="KW-0648">Protein biosynthesis</keyword>
<keyword id="KW-1185">Reference proteome</keyword>
<reference key="1">
    <citation type="submission" date="2008-06" db="EMBL/GenBank/DDBJ databases">
        <title>Complete sequence of Pelodictyon phaeoclathratiforme BU-1.</title>
        <authorList>
            <consortium name="US DOE Joint Genome Institute"/>
            <person name="Lucas S."/>
            <person name="Copeland A."/>
            <person name="Lapidus A."/>
            <person name="Glavina del Rio T."/>
            <person name="Dalin E."/>
            <person name="Tice H."/>
            <person name="Bruce D."/>
            <person name="Goodwin L."/>
            <person name="Pitluck S."/>
            <person name="Schmutz J."/>
            <person name="Larimer F."/>
            <person name="Land M."/>
            <person name="Hauser L."/>
            <person name="Kyrpides N."/>
            <person name="Mikhailova N."/>
            <person name="Liu Z."/>
            <person name="Li T."/>
            <person name="Zhao F."/>
            <person name="Overmann J."/>
            <person name="Bryant D.A."/>
            <person name="Richardson P."/>
        </authorList>
    </citation>
    <scope>NUCLEOTIDE SEQUENCE [LARGE SCALE GENOMIC DNA]</scope>
    <source>
        <strain>DSM 5477 / BU-1</strain>
    </source>
</reference>
<protein>
    <recommendedName>
        <fullName evidence="1">Peptide chain release factor 1</fullName>
        <shortName evidence="1">RF-1</shortName>
    </recommendedName>
</protein>
<feature type="chain" id="PRO_1000093483" description="Peptide chain release factor 1">
    <location>
        <begin position="1"/>
        <end position="357"/>
    </location>
</feature>
<feature type="modified residue" description="N5-methylglutamine" evidence="1">
    <location>
        <position position="234"/>
    </location>
</feature>
<evidence type="ECO:0000255" key="1">
    <source>
        <dbReference type="HAMAP-Rule" id="MF_00093"/>
    </source>
</evidence>
<accession>B4SAR5</accession>
<name>RF1_PELPB</name>
<proteinExistence type="inferred from homology"/>